<keyword id="KW-0067">ATP-binding</keyword>
<keyword id="KW-0133">Cell shape</keyword>
<keyword id="KW-0961">Cell wall biogenesis/degradation</keyword>
<keyword id="KW-0963">Cytoplasm</keyword>
<keyword id="KW-0436">Ligase</keyword>
<keyword id="KW-0460">Magnesium</keyword>
<keyword id="KW-0464">Manganese</keyword>
<keyword id="KW-0479">Metal-binding</keyword>
<keyword id="KW-0547">Nucleotide-binding</keyword>
<keyword id="KW-0573">Peptidoglycan synthesis</keyword>
<accession>Q9ZGN0</accession>
<protein>
    <recommendedName>
        <fullName evidence="2">D-alanine--D-alanine ligase</fullName>
        <ecNumber evidence="2">6.3.2.4</ecNumber>
    </recommendedName>
    <alternativeName>
        <fullName evidence="2">D-Ala-D-Ala ligase</fullName>
    </alternativeName>
    <alternativeName>
        <fullName evidence="2">D-alanylalanine synthetase</fullName>
    </alternativeName>
</protein>
<dbReference type="EC" id="6.3.2.4" evidence="2"/>
<dbReference type="EMBL" id="AF077728">
    <property type="protein sequence ID" value="AAC99396.1"/>
    <property type="molecule type" value="Genomic_DNA"/>
</dbReference>
<dbReference type="RefSeq" id="WP_011728314.1">
    <property type="nucleotide sequence ID" value="NZ_UGQO01000002.1"/>
</dbReference>
<dbReference type="SMR" id="Q9ZGN0"/>
<dbReference type="KEGG" id="msh:LI98_11915"/>
<dbReference type="KEGG" id="msn:LI99_11910"/>
<dbReference type="OMA" id="TQYRIPC"/>
<dbReference type="BRENDA" id="6.3.2.4">
    <property type="organism ID" value="3512"/>
</dbReference>
<dbReference type="UniPathway" id="UPA00219"/>
<dbReference type="GO" id="GO:0005829">
    <property type="term" value="C:cytosol"/>
    <property type="evidence" value="ECO:0007669"/>
    <property type="project" value="TreeGrafter"/>
</dbReference>
<dbReference type="GO" id="GO:0005524">
    <property type="term" value="F:ATP binding"/>
    <property type="evidence" value="ECO:0007669"/>
    <property type="project" value="UniProtKB-KW"/>
</dbReference>
<dbReference type="GO" id="GO:0008716">
    <property type="term" value="F:D-alanine-D-alanine ligase activity"/>
    <property type="evidence" value="ECO:0007669"/>
    <property type="project" value="UniProtKB-UniRule"/>
</dbReference>
<dbReference type="GO" id="GO:0046872">
    <property type="term" value="F:metal ion binding"/>
    <property type="evidence" value="ECO:0007669"/>
    <property type="project" value="UniProtKB-KW"/>
</dbReference>
<dbReference type="GO" id="GO:0071555">
    <property type="term" value="P:cell wall organization"/>
    <property type="evidence" value="ECO:0007669"/>
    <property type="project" value="UniProtKB-KW"/>
</dbReference>
<dbReference type="GO" id="GO:0009252">
    <property type="term" value="P:peptidoglycan biosynthetic process"/>
    <property type="evidence" value="ECO:0007669"/>
    <property type="project" value="UniProtKB-UniRule"/>
</dbReference>
<dbReference type="GO" id="GO:0008360">
    <property type="term" value="P:regulation of cell shape"/>
    <property type="evidence" value="ECO:0007669"/>
    <property type="project" value="UniProtKB-KW"/>
</dbReference>
<dbReference type="FunFam" id="3.30.470.20:FF:000008">
    <property type="entry name" value="D-alanine--D-alanine ligase"/>
    <property type="match status" value="1"/>
</dbReference>
<dbReference type="Gene3D" id="3.40.50.20">
    <property type="match status" value="1"/>
</dbReference>
<dbReference type="Gene3D" id="3.30.1490.20">
    <property type="entry name" value="ATP-grasp fold, A domain"/>
    <property type="match status" value="1"/>
</dbReference>
<dbReference type="Gene3D" id="3.30.470.20">
    <property type="entry name" value="ATP-grasp fold, B domain"/>
    <property type="match status" value="1"/>
</dbReference>
<dbReference type="HAMAP" id="MF_00047">
    <property type="entry name" value="Dala_Dala_lig"/>
    <property type="match status" value="1"/>
</dbReference>
<dbReference type="InterPro" id="IPR011761">
    <property type="entry name" value="ATP-grasp"/>
</dbReference>
<dbReference type="InterPro" id="IPR013815">
    <property type="entry name" value="ATP_grasp_subdomain_1"/>
</dbReference>
<dbReference type="InterPro" id="IPR000291">
    <property type="entry name" value="D-Ala_lig_Van_CS"/>
</dbReference>
<dbReference type="InterPro" id="IPR005905">
    <property type="entry name" value="D_ala_D_ala"/>
</dbReference>
<dbReference type="InterPro" id="IPR011095">
    <property type="entry name" value="Dala_Dala_lig_C"/>
</dbReference>
<dbReference type="InterPro" id="IPR011127">
    <property type="entry name" value="Dala_Dala_lig_N"/>
</dbReference>
<dbReference type="InterPro" id="IPR016185">
    <property type="entry name" value="PreATP-grasp_dom_sf"/>
</dbReference>
<dbReference type="NCBIfam" id="TIGR01205">
    <property type="entry name" value="D_ala_D_alaTIGR"/>
    <property type="match status" value="1"/>
</dbReference>
<dbReference type="NCBIfam" id="NF002378">
    <property type="entry name" value="PRK01372.1"/>
    <property type="match status" value="1"/>
</dbReference>
<dbReference type="NCBIfam" id="NF002528">
    <property type="entry name" value="PRK01966.1-4"/>
    <property type="match status" value="1"/>
</dbReference>
<dbReference type="PANTHER" id="PTHR23132">
    <property type="entry name" value="D-ALANINE--D-ALANINE LIGASE"/>
    <property type="match status" value="1"/>
</dbReference>
<dbReference type="PANTHER" id="PTHR23132:SF25">
    <property type="entry name" value="D-ALANINE--D-ALANINE LIGASE A"/>
    <property type="match status" value="1"/>
</dbReference>
<dbReference type="Pfam" id="PF07478">
    <property type="entry name" value="Dala_Dala_lig_C"/>
    <property type="match status" value="1"/>
</dbReference>
<dbReference type="Pfam" id="PF01820">
    <property type="entry name" value="Dala_Dala_lig_N"/>
    <property type="match status" value="1"/>
</dbReference>
<dbReference type="PIRSF" id="PIRSF039102">
    <property type="entry name" value="Ddl/VanB"/>
    <property type="match status" value="1"/>
</dbReference>
<dbReference type="SUPFAM" id="SSF56059">
    <property type="entry name" value="Glutathione synthetase ATP-binding domain-like"/>
    <property type="match status" value="1"/>
</dbReference>
<dbReference type="SUPFAM" id="SSF52440">
    <property type="entry name" value="PreATP-grasp domain"/>
    <property type="match status" value="1"/>
</dbReference>
<dbReference type="PROSITE" id="PS50975">
    <property type="entry name" value="ATP_GRASP"/>
    <property type="match status" value="1"/>
</dbReference>
<dbReference type="PROSITE" id="PS00843">
    <property type="entry name" value="DALA_DALA_LIGASE_1"/>
    <property type="match status" value="1"/>
</dbReference>
<dbReference type="PROSITE" id="PS00844">
    <property type="entry name" value="DALA_DALA_LIGASE_2"/>
    <property type="match status" value="1"/>
</dbReference>
<gene>
    <name evidence="2" type="primary">ddl</name>
</gene>
<proteinExistence type="inferred from homology"/>
<organism>
    <name type="scientific">Mycolicibacterium smegmatis</name>
    <name type="common">Mycobacterium smegmatis</name>
    <dbReference type="NCBI Taxonomy" id="1772"/>
    <lineage>
        <taxon>Bacteria</taxon>
        <taxon>Bacillati</taxon>
        <taxon>Actinomycetota</taxon>
        <taxon>Actinomycetes</taxon>
        <taxon>Mycobacteriales</taxon>
        <taxon>Mycobacteriaceae</taxon>
        <taxon>Mycolicibacterium</taxon>
    </lineage>
</organism>
<evidence type="ECO:0000250" key="1"/>
<evidence type="ECO:0000255" key="2">
    <source>
        <dbReference type="HAMAP-Rule" id="MF_00047"/>
    </source>
</evidence>
<reference key="1">
    <citation type="submission" date="1998-07" db="EMBL/GenBank/DDBJ databases">
        <title>A temperature-sensitive mutant of Mycobacterium smegmatis which is defective in cell wall biosynthesis.</title>
        <authorList>
            <person name="Belanger A.E."/>
            <person name="Porter J.C."/>
            <person name="Hatfull G.F."/>
        </authorList>
    </citation>
    <scope>NUCLEOTIDE SEQUENCE [GENOMIC DNA]</scope>
</reference>
<sequence>MTAPNHPPGRTRVAVVYGGRSSEHAISCVSAGSILRNLDPERFEVVAIGITPDGSWVLTDGRPETLAITDGKLPAVTEASGTELALPAAPNRSGQLLALGNGPGEILAAVDVVFPVLHGPYGEDGTIQGLLELAGVPYVGSGVLASAAGMDKEYTKKLLAAEGLPIGDQVVLRPGVETLDLEQRERLGLPVFVKPARGGSSIGVSRVTAWDELPAAVALARRHDPKVIVEAAVIGRELECGVLEFPDGRLEASTVGEIRVAGVRGREDGFYDFATKYLEDAAELDVPAKVDDDVADEIRQLAVRAFTAIGCQGLARVDFFLTDDGPVINEINTMPGFTTISMYPRMWAAGGIDYPTLLAAMVDTAIARGTGLR</sequence>
<name>DDL_MYCSM</name>
<comment type="function">
    <text evidence="2">Cell wall formation.</text>
</comment>
<comment type="catalytic activity">
    <reaction evidence="2">
        <text>2 D-alanine + ATP = D-alanyl-D-alanine + ADP + phosphate + H(+)</text>
        <dbReference type="Rhea" id="RHEA:11224"/>
        <dbReference type="ChEBI" id="CHEBI:15378"/>
        <dbReference type="ChEBI" id="CHEBI:30616"/>
        <dbReference type="ChEBI" id="CHEBI:43474"/>
        <dbReference type="ChEBI" id="CHEBI:57416"/>
        <dbReference type="ChEBI" id="CHEBI:57822"/>
        <dbReference type="ChEBI" id="CHEBI:456216"/>
        <dbReference type="EC" id="6.3.2.4"/>
    </reaction>
</comment>
<comment type="cofactor">
    <cofactor evidence="1">
        <name>Mg(2+)</name>
        <dbReference type="ChEBI" id="CHEBI:18420"/>
    </cofactor>
    <cofactor evidence="1">
        <name>Mn(2+)</name>
        <dbReference type="ChEBI" id="CHEBI:29035"/>
    </cofactor>
    <text evidence="1">Binds 2 magnesium or manganese ions per subunit.</text>
</comment>
<comment type="pathway">
    <text evidence="2">Cell wall biogenesis; peptidoglycan biosynthesis.</text>
</comment>
<comment type="subcellular location">
    <subcellularLocation>
        <location evidence="2">Cytoplasm</location>
    </subcellularLocation>
</comment>
<comment type="similarity">
    <text evidence="2">Belongs to the D-alanine--D-alanine ligase family.</text>
</comment>
<feature type="chain" id="PRO_0000177843" description="D-alanine--D-alanine ligase">
    <location>
        <begin position="1"/>
        <end position="373"/>
    </location>
</feature>
<feature type="domain" description="ATP-grasp" evidence="2">
    <location>
        <begin position="156"/>
        <end position="363"/>
    </location>
</feature>
<feature type="binding site" evidence="2">
    <location>
        <begin position="184"/>
        <end position="239"/>
    </location>
    <ligand>
        <name>ATP</name>
        <dbReference type="ChEBI" id="CHEBI:30616"/>
    </ligand>
</feature>
<feature type="binding site" evidence="2">
    <location>
        <position position="318"/>
    </location>
    <ligand>
        <name>Mg(2+)</name>
        <dbReference type="ChEBI" id="CHEBI:18420"/>
        <label>1</label>
    </ligand>
</feature>
<feature type="binding site" evidence="2">
    <location>
        <position position="330"/>
    </location>
    <ligand>
        <name>Mg(2+)</name>
        <dbReference type="ChEBI" id="CHEBI:18420"/>
        <label>1</label>
    </ligand>
</feature>
<feature type="binding site" evidence="2">
    <location>
        <position position="330"/>
    </location>
    <ligand>
        <name>Mg(2+)</name>
        <dbReference type="ChEBI" id="CHEBI:18420"/>
        <label>2</label>
    </ligand>
</feature>
<feature type="binding site" evidence="2">
    <location>
        <position position="332"/>
    </location>
    <ligand>
        <name>Mg(2+)</name>
        <dbReference type="ChEBI" id="CHEBI:18420"/>
        <label>2</label>
    </ligand>
</feature>